<organism>
    <name type="scientific">Vibrio vulnificus (strain CMCP6)</name>
    <dbReference type="NCBI Taxonomy" id="216895"/>
    <lineage>
        <taxon>Bacteria</taxon>
        <taxon>Pseudomonadati</taxon>
        <taxon>Pseudomonadota</taxon>
        <taxon>Gammaproteobacteria</taxon>
        <taxon>Vibrionales</taxon>
        <taxon>Vibrionaceae</taxon>
        <taxon>Vibrio</taxon>
    </lineage>
</organism>
<sequence>MYYGFDVGGTKIEFGAFNEKLERVATERVPTPTDDYPLLLETIAGLVAKYDQEFACEGKIGLGLPGMEDADDATVLTVNVPAAKGKPLRADLEAKIGRSVKIENDANCFALSEAWDEELQDAPSVMGLILGTGFGGGLIYEGKVFSGRNNVAGELGHMRLPLDAWFHLGDNAPLLGCGCGKKGCLDSYLSGRGFELLYAHYYGEEKKAIDIIKANAAGDEKAAEHVERFMELLAICFGNIFTANDPHVVALGGGLSNFELIYEEMPKRVPKYLLSVAKCPKIIKAKHGDSGGVRGAAFLNIKG</sequence>
<keyword id="KW-0002">3D-structure</keyword>
<keyword id="KW-0067">ATP-binding</keyword>
<keyword id="KW-0119">Carbohydrate metabolism</keyword>
<keyword id="KW-0418">Kinase</keyword>
<keyword id="KW-0479">Metal-binding</keyword>
<keyword id="KW-0547">Nucleotide-binding</keyword>
<keyword id="KW-0808">Transferase</keyword>
<keyword id="KW-0862">Zinc</keyword>
<accession>Q8D9M7</accession>
<dbReference type="EC" id="2.7.1.59" evidence="1"/>
<dbReference type="EMBL" id="AE016795">
    <property type="protein sequence ID" value="AAO10921.2"/>
    <property type="molecule type" value="Genomic_DNA"/>
</dbReference>
<dbReference type="RefSeq" id="WP_011080420.1">
    <property type="nucleotide sequence ID" value="NC_004459.3"/>
</dbReference>
<dbReference type="PDB" id="4DB3">
    <property type="method" value="X-ray"/>
    <property type="resolution" value="1.95 A"/>
    <property type="chains" value="A=1-303"/>
</dbReference>
<dbReference type="PDBsum" id="4DB3"/>
<dbReference type="SMR" id="Q8D9M7"/>
<dbReference type="KEGG" id="vvu:VV1_2570"/>
<dbReference type="HOGENOM" id="CLU_036604_0_3_6"/>
<dbReference type="UniPathway" id="UPA00544"/>
<dbReference type="EvolutionaryTrace" id="Q8D9M7"/>
<dbReference type="Proteomes" id="UP000002275">
    <property type="component" value="Chromosome 1"/>
</dbReference>
<dbReference type="GO" id="GO:0005524">
    <property type="term" value="F:ATP binding"/>
    <property type="evidence" value="ECO:0007669"/>
    <property type="project" value="UniProtKB-UniRule"/>
</dbReference>
<dbReference type="GO" id="GO:0045127">
    <property type="term" value="F:N-acetylglucosamine kinase activity"/>
    <property type="evidence" value="ECO:0007669"/>
    <property type="project" value="UniProtKB-UniRule"/>
</dbReference>
<dbReference type="GO" id="GO:0008270">
    <property type="term" value="F:zinc ion binding"/>
    <property type="evidence" value="ECO:0007669"/>
    <property type="project" value="UniProtKB-UniRule"/>
</dbReference>
<dbReference type="GO" id="GO:0006044">
    <property type="term" value="P:N-acetylglucosamine metabolic process"/>
    <property type="evidence" value="ECO:0007669"/>
    <property type="project" value="UniProtKB-UniRule"/>
</dbReference>
<dbReference type="GO" id="GO:0009254">
    <property type="term" value="P:peptidoglycan turnover"/>
    <property type="evidence" value="ECO:0007669"/>
    <property type="project" value="UniProtKB-UniRule"/>
</dbReference>
<dbReference type="CDD" id="cd24057">
    <property type="entry name" value="ASKHA_NBD_ROK_NAGK"/>
    <property type="match status" value="1"/>
</dbReference>
<dbReference type="FunFam" id="3.30.420.40:FF:000049">
    <property type="entry name" value="N-acetyl-D-glucosamine kinase"/>
    <property type="match status" value="1"/>
</dbReference>
<dbReference type="FunFam" id="3.30.420.40:FF:000051">
    <property type="entry name" value="N-acetyl-D-glucosamine kinase"/>
    <property type="match status" value="1"/>
</dbReference>
<dbReference type="Gene3D" id="3.30.420.40">
    <property type="match status" value="2"/>
</dbReference>
<dbReference type="HAMAP" id="MF_01271">
    <property type="entry name" value="GlcNAc_kinase"/>
    <property type="match status" value="1"/>
</dbReference>
<dbReference type="InterPro" id="IPR043129">
    <property type="entry name" value="ATPase_NBD"/>
</dbReference>
<dbReference type="InterPro" id="IPR023505">
    <property type="entry name" value="N-acetyl-D-glucosamine_kinase"/>
</dbReference>
<dbReference type="InterPro" id="IPR000600">
    <property type="entry name" value="ROK"/>
</dbReference>
<dbReference type="InterPro" id="IPR049874">
    <property type="entry name" value="ROK_cs"/>
</dbReference>
<dbReference type="NCBIfam" id="NF009835">
    <property type="entry name" value="PRK13310.1"/>
    <property type="match status" value="1"/>
</dbReference>
<dbReference type="PANTHER" id="PTHR18964:SF162">
    <property type="entry name" value="N-ACETYL-D-GLUCOSAMINE KINASE"/>
    <property type="match status" value="1"/>
</dbReference>
<dbReference type="PANTHER" id="PTHR18964">
    <property type="entry name" value="ROK (REPRESSOR, ORF, KINASE) FAMILY"/>
    <property type="match status" value="1"/>
</dbReference>
<dbReference type="Pfam" id="PF00480">
    <property type="entry name" value="ROK"/>
    <property type="match status" value="1"/>
</dbReference>
<dbReference type="SUPFAM" id="SSF53067">
    <property type="entry name" value="Actin-like ATPase domain"/>
    <property type="match status" value="1"/>
</dbReference>
<dbReference type="PROSITE" id="PS01125">
    <property type="entry name" value="ROK"/>
    <property type="match status" value="1"/>
</dbReference>
<evidence type="ECO:0000255" key="1">
    <source>
        <dbReference type="HAMAP-Rule" id="MF_01271"/>
    </source>
</evidence>
<evidence type="ECO:0007829" key="2">
    <source>
        <dbReference type="PDB" id="4DB3"/>
    </source>
</evidence>
<feature type="chain" id="PRO_0000270122" description="N-acetyl-D-glucosamine kinase">
    <location>
        <begin position="1"/>
        <end position="303"/>
    </location>
</feature>
<feature type="binding site" evidence="1">
    <location>
        <begin position="4"/>
        <end position="11"/>
    </location>
    <ligand>
        <name>ATP</name>
        <dbReference type="ChEBI" id="CHEBI:30616"/>
    </ligand>
</feature>
<feature type="binding site" evidence="1">
    <location>
        <begin position="133"/>
        <end position="140"/>
    </location>
    <ligand>
        <name>ATP</name>
        <dbReference type="ChEBI" id="CHEBI:30616"/>
    </ligand>
</feature>
<feature type="binding site" evidence="1">
    <location>
        <position position="157"/>
    </location>
    <ligand>
        <name>Zn(2+)</name>
        <dbReference type="ChEBI" id="CHEBI:29105"/>
    </ligand>
</feature>
<feature type="binding site" evidence="1">
    <location>
        <position position="177"/>
    </location>
    <ligand>
        <name>Zn(2+)</name>
        <dbReference type="ChEBI" id="CHEBI:29105"/>
    </ligand>
</feature>
<feature type="binding site" evidence="1">
    <location>
        <position position="179"/>
    </location>
    <ligand>
        <name>Zn(2+)</name>
        <dbReference type="ChEBI" id="CHEBI:29105"/>
    </ligand>
</feature>
<feature type="binding site" evidence="1">
    <location>
        <position position="184"/>
    </location>
    <ligand>
        <name>Zn(2+)</name>
        <dbReference type="ChEBI" id="CHEBI:29105"/>
    </ligand>
</feature>
<feature type="strand" evidence="2">
    <location>
        <begin position="2"/>
        <end position="7"/>
    </location>
</feature>
<feature type="strand" evidence="2">
    <location>
        <begin position="9"/>
        <end position="17"/>
    </location>
</feature>
<feature type="strand" evidence="2">
    <location>
        <begin position="23"/>
        <end position="30"/>
    </location>
</feature>
<feature type="helix" evidence="2">
    <location>
        <begin position="36"/>
        <end position="54"/>
    </location>
</feature>
<feature type="strand" evidence="2">
    <location>
        <begin position="59"/>
        <end position="68"/>
    </location>
</feature>
<feature type="turn" evidence="2">
    <location>
        <begin position="70"/>
        <end position="72"/>
    </location>
</feature>
<feature type="strand" evidence="2">
    <location>
        <begin position="75"/>
        <end position="80"/>
    </location>
</feature>
<feature type="helix" evidence="2">
    <location>
        <begin position="81"/>
        <end position="83"/>
    </location>
</feature>
<feature type="helix" evidence="2">
    <location>
        <begin position="88"/>
        <end position="96"/>
    </location>
</feature>
<feature type="strand" evidence="2">
    <location>
        <begin position="101"/>
        <end position="104"/>
    </location>
</feature>
<feature type="helix" evidence="2">
    <location>
        <begin position="105"/>
        <end position="114"/>
    </location>
</feature>
<feature type="turn" evidence="2">
    <location>
        <begin position="117"/>
        <end position="121"/>
    </location>
</feature>
<feature type="strand" evidence="2">
    <location>
        <begin position="123"/>
        <end position="140"/>
    </location>
</feature>
<feature type="helix" evidence="2">
    <location>
        <begin position="155"/>
        <end position="157"/>
    </location>
</feature>
<feature type="helix" evidence="2">
    <location>
        <begin position="162"/>
        <end position="167"/>
    </location>
</feature>
<feature type="strand" evidence="2">
    <location>
        <begin position="182"/>
        <end position="184"/>
    </location>
</feature>
<feature type="helix" evidence="2">
    <location>
        <begin position="185"/>
        <end position="187"/>
    </location>
</feature>
<feature type="helix" evidence="2">
    <location>
        <begin position="191"/>
        <end position="202"/>
    </location>
</feature>
<feature type="helix" evidence="2">
    <location>
        <begin position="208"/>
        <end position="217"/>
    </location>
</feature>
<feature type="helix" evidence="2">
    <location>
        <begin position="220"/>
        <end position="244"/>
    </location>
</feature>
<feature type="strand" evidence="2">
    <location>
        <begin position="247"/>
        <end position="253"/>
    </location>
</feature>
<feature type="helix" evidence="2">
    <location>
        <begin position="254"/>
        <end position="257"/>
    </location>
</feature>
<feature type="helix" evidence="2">
    <location>
        <begin position="260"/>
        <end position="268"/>
    </location>
</feature>
<feature type="helix" evidence="2">
    <location>
        <begin position="269"/>
        <end position="272"/>
    </location>
</feature>
<feature type="strand" evidence="2">
    <location>
        <begin position="281"/>
        <end position="284"/>
    </location>
</feature>
<feature type="helix" evidence="2">
    <location>
        <begin position="288"/>
        <end position="290"/>
    </location>
</feature>
<feature type="helix" evidence="2">
    <location>
        <begin position="291"/>
        <end position="298"/>
    </location>
</feature>
<name>NAGK_VIBVU</name>
<proteinExistence type="evidence at protein level"/>
<reference key="1">
    <citation type="submission" date="2002-12" db="EMBL/GenBank/DDBJ databases">
        <title>Complete genome sequence of Vibrio vulnificus CMCP6.</title>
        <authorList>
            <person name="Rhee J.H."/>
            <person name="Kim S.Y."/>
            <person name="Chung S.S."/>
            <person name="Kim J.J."/>
            <person name="Moon Y.H."/>
            <person name="Jeong H."/>
            <person name="Choy H.E."/>
        </authorList>
    </citation>
    <scope>NUCLEOTIDE SEQUENCE [LARGE SCALE GENOMIC DNA]</scope>
    <source>
        <strain>CMCP6</strain>
    </source>
</reference>
<reference key="2">
    <citation type="journal article" date="2011" name="Mol. Syst. Biol.">
        <title>Integrative genome-scale metabolic analysis of Vibrio vulnificus for drug targeting and discovery.</title>
        <authorList>
            <person name="Kim H.U."/>
            <person name="Kim S.Y."/>
            <person name="Jeong H."/>
            <person name="Kim T.Y."/>
            <person name="Kim J.J."/>
            <person name="Choy H.E."/>
            <person name="Yi K.Y."/>
            <person name="Rhee J.H."/>
            <person name="Lee S.Y."/>
        </authorList>
    </citation>
    <scope>SEQUENCE REVISION TO 297</scope>
    <source>
        <strain>CMCP6</strain>
    </source>
</reference>
<protein>
    <recommendedName>
        <fullName evidence="1">N-acetyl-D-glucosamine kinase</fullName>
        <ecNumber evidence="1">2.7.1.59</ecNumber>
    </recommendedName>
    <alternativeName>
        <fullName evidence="1">GlcNAc kinase</fullName>
    </alternativeName>
</protein>
<gene>
    <name evidence="1" type="primary">nagK</name>
    <name type="ordered locus">VV1_2570</name>
</gene>
<comment type="function">
    <text evidence="1">Catalyzes the phosphorylation of N-acetyl-D-glucosamine (GlcNAc) derived from cell-wall degradation, yielding GlcNAc-6-P.</text>
</comment>
<comment type="catalytic activity">
    <reaction evidence="1">
        <text>N-acetyl-D-glucosamine + ATP = N-acetyl-D-glucosamine 6-phosphate + ADP + H(+)</text>
        <dbReference type="Rhea" id="RHEA:17417"/>
        <dbReference type="ChEBI" id="CHEBI:15378"/>
        <dbReference type="ChEBI" id="CHEBI:30616"/>
        <dbReference type="ChEBI" id="CHEBI:57513"/>
        <dbReference type="ChEBI" id="CHEBI:456216"/>
        <dbReference type="ChEBI" id="CHEBI:506227"/>
        <dbReference type="EC" id="2.7.1.59"/>
    </reaction>
</comment>
<comment type="pathway">
    <text evidence="1">Cell wall biogenesis; peptidoglycan recycling.</text>
</comment>
<comment type="similarity">
    <text evidence="1">Belongs to the ROK (NagC/XylR) family. NagK subfamily.</text>
</comment>